<protein>
    <recommendedName>
        <fullName evidence="1">Elongation factor Ts</fullName>
        <shortName evidence="1">EF-Ts</shortName>
    </recommendedName>
</protein>
<reference key="1">
    <citation type="journal article" date="2004" name="Proc. Natl. Acad. Sci. U.S.A.">
        <title>Insights into the evolution of Yersinia pestis through whole-genome comparison with Yersinia pseudotuberculosis.</title>
        <authorList>
            <person name="Chain P.S.G."/>
            <person name="Carniel E."/>
            <person name="Larimer F.W."/>
            <person name="Lamerdin J."/>
            <person name="Stoutland P.O."/>
            <person name="Regala W.M."/>
            <person name="Georgescu A.M."/>
            <person name="Vergez L.M."/>
            <person name="Land M.L."/>
            <person name="Motin V.L."/>
            <person name="Brubaker R.R."/>
            <person name="Fowler J."/>
            <person name="Hinnebusch J."/>
            <person name="Marceau M."/>
            <person name="Medigue C."/>
            <person name="Simonet M."/>
            <person name="Chenal-Francisque V."/>
            <person name="Souza B."/>
            <person name="Dacheux D."/>
            <person name="Elliott J.M."/>
            <person name="Derbise A."/>
            <person name="Hauser L.J."/>
            <person name="Garcia E."/>
        </authorList>
    </citation>
    <scope>NUCLEOTIDE SEQUENCE [LARGE SCALE GENOMIC DNA]</scope>
    <source>
        <strain>IP32953</strain>
    </source>
</reference>
<proteinExistence type="inferred from homology"/>
<organism>
    <name type="scientific">Yersinia pseudotuberculosis serotype I (strain IP32953)</name>
    <dbReference type="NCBI Taxonomy" id="273123"/>
    <lineage>
        <taxon>Bacteria</taxon>
        <taxon>Pseudomonadati</taxon>
        <taxon>Pseudomonadota</taxon>
        <taxon>Gammaproteobacteria</taxon>
        <taxon>Enterobacterales</taxon>
        <taxon>Yersiniaceae</taxon>
        <taxon>Yersinia</taxon>
    </lineage>
</organism>
<keyword id="KW-0963">Cytoplasm</keyword>
<keyword id="KW-0251">Elongation factor</keyword>
<keyword id="KW-0648">Protein biosynthesis</keyword>
<feature type="chain" id="PRO_0000161241" description="Elongation factor Ts">
    <location>
        <begin position="1"/>
        <end position="285"/>
    </location>
</feature>
<feature type="region of interest" description="Involved in Mg(2+) ion dislocation from EF-Tu" evidence="1">
    <location>
        <begin position="82"/>
        <end position="85"/>
    </location>
</feature>
<sequence length="285" mass="30721">MVAITAALVKELRERTAAGMMECKKALVEANGDIELAIDNMRKSGQAKAAKKAGRIAAEGIILAKVSADGKYGVILELNCETDFVAKDAGFKAFGEEVINAALAEKIADIDVLKAKFEEQRANLVAKIGENINIRRVAVLEGDILGTYLHGARIGVMVAATGADEELVKHIAMHIAASKPEYVKPDDVPAEVVAREHQIQLDIAIESGKPREIAEKMVEGRMRKFTGEVSLTGQNFVMDPSKTVGDLLKENNADVVNFIRFEVGEGIEKVETDFAAEVAAMSKQS</sequence>
<name>EFTS_YERPS</name>
<comment type="function">
    <text evidence="1">Associates with the EF-Tu.GDP complex and induces the exchange of GDP to GTP. It remains bound to the aminoacyl-tRNA.EF-Tu.GTP complex up to the GTP hydrolysis stage on the ribosome.</text>
</comment>
<comment type="subcellular location">
    <subcellularLocation>
        <location evidence="1">Cytoplasm</location>
    </subcellularLocation>
</comment>
<comment type="similarity">
    <text evidence="1">Belongs to the EF-Ts family.</text>
</comment>
<gene>
    <name evidence="1" type="primary">tsf</name>
    <name type="ordered locus">YPTB3002</name>
</gene>
<accession>Q667J0</accession>
<dbReference type="EMBL" id="BX936398">
    <property type="protein sequence ID" value="CAH22240.1"/>
    <property type="molecule type" value="Genomic_DNA"/>
</dbReference>
<dbReference type="RefSeq" id="WP_002212132.1">
    <property type="nucleotide sequence ID" value="NZ_CP009712.1"/>
</dbReference>
<dbReference type="SMR" id="Q667J0"/>
<dbReference type="GeneID" id="96662369"/>
<dbReference type="KEGG" id="ypo:BZ17_3619"/>
<dbReference type="KEGG" id="yps:YPTB3002"/>
<dbReference type="PATRIC" id="fig|273123.14.peg.3799"/>
<dbReference type="Proteomes" id="UP000001011">
    <property type="component" value="Chromosome"/>
</dbReference>
<dbReference type="GO" id="GO:0005737">
    <property type="term" value="C:cytoplasm"/>
    <property type="evidence" value="ECO:0007669"/>
    <property type="project" value="UniProtKB-SubCell"/>
</dbReference>
<dbReference type="GO" id="GO:0003746">
    <property type="term" value="F:translation elongation factor activity"/>
    <property type="evidence" value="ECO:0007669"/>
    <property type="project" value="UniProtKB-UniRule"/>
</dbReference>
<dbReference type="CDD" id="cd14275">
    <property type="entry name" value="UBA_EF-Ts"/>
    <property type="match status" value="1"/>
</dbReference>
<dbReference type="FunFam" id="1.10.286.20:FF:000001">
    <property type="entry name" value="Elongation factor Ts"/>
    <property type="match status" value="1"/>
</dbReference>
<dbReference type="FunFam" id="1.10.8.10:FF:000001">
    <property type="entry name" value="Elongation factor Ts"/>
    <property type="match status" value="1"/>
</dbReference>
<dbReference type="FunFam" id="3.30.479.20:FF:000001">
    <property type="entry name" value="Elongation factor Ts"/>
    <property type="match status" value="1"/>
</dbReference>
<dbReference type="Gene3D" id="1.10.286.20">
    <property type="match status" value="1"/>
</dbReference>
<dbReference type="Gene3D" id="1.10.8.10">
    <property type="entry name" value="DNA helicase RuvA subunit, C-terminal domain"/>
    <property type="match status" value="1"/>
</dbReference>
<dbReference type="Gene3D" id="3.30.479.20">
    <property type="entry name" value="Elongation factor Ts, dimerisation domain"/>
    <property type="match status" value="2"/>
</dbReference>
<dbReference type="HAMAP" id="MF_00050">
    <property type="entry name" value="EF_Ts"/>
    <property type="match status" value="1"/>
</dbReference>
<dbReference type="InterPro" id="IPR036402">
    <property type="entry name" value="EF-Ts_dimer_sf"/>
</dbReference>
<dbReference type="InterPro" id="IPR001816">
    <property type="entry name" value="Transl_elong_EFTs/EF1B"/>
</dbReference>
<dbReference type="InterPro" id="IPR014039">
    <property type="entry name" value="Transl_elong_EFTs/EF1B_dimer"/>
</dbReference>
<dbReference type="InterPro" id="IPR018101">
    <property type="entry name" value="Transl_elong_Ts_CS"/>
</dbReference>
<dbReference type="InterPro" id="IPR009060">
    <property type="entry name" value="UBA-like_sf"/>
</dbReference>
<dbReference type="NCBIfam" id="TIGR00116">
    <property type="entry name" value="tsf"/>
    <property type="match status" value="1"/>
</dbReference>
<dbReference type="PANTHER" id="PTHR11741">
    <property type="entry name" value="ELONGATION FACTOR TS"/>
    <property type="match status" value="1"/>
</dbReference>
<dbReference type="PANTHER" id="PTHR11741:SF0">
    <property type="entry name" value="ELONGATION FACTOR TS, MITOCHONDRIAL"/>
    <property type="match status" value="1"/>
</dbReference>
<dbReference type="Pfam" id="PF00889">
    <property type="entry name" value="EF_TS"/>
    <property type="match status" value="1"/>
</dbReference>
<dbReference type="SUPFAM" id="SSF54713">
    <property type="entry name" value="Elongation factor Ts (EF-Ts), dimerisation domain"/>
    <property type="match status" value="2"/>
</dbReference>
<dbReference type="SUPFAM" id="SSF46934">
    <property type="entry name" value="UBA-like"/>
    <property type="match status" value="1"/>
</dbReference>
<dbReference type="PROSITE" id="PS01127">
    <property type="entry name" value="EF_TS_2"/>
    <property type="match status" value="1"/>
</dbReference>
<evidence type="ECO:0000255" key="1">
    <source>
        <dbReference type="HAMAP-Rule" id="MF_00050"/>
    </source>
</evidence>